<protein>
    <recommendedName>
        <fullName evidence="1">tRNA-cytidine(32) 2-sulfurtransferase</fullName>
        <ecNumber evidence="1">2.8.1.-</ecNumber>
    </recommendedName>
    <alternativeName>
        <fullName evidence="1">Two-thiocytidine biosynthesis protein A</fullName>
    </alternativeName>
    <alternativeName>
        <fullName evidence="1">tRNA 2-thiocytidine biosynthesis protein TtcA</fullName>
    </alternativeName>
</protein>
<accession>Q57P06</accession>
<evidence type="ECO:0000255" key="1">
    <source>
        <dbReference type="HAMAP-Rule" id="MF_01850"/>
    </source>
</evidence>
<name>TTCA_SALCH</name>
<reference key="1">
    <citation type="journal article" date="2005" name="Nucleic Acids Res.">
        <title>The genome sequence of Salmonella enterica serovar Choleraesuis, a highly invasive and resistant zoonotic pathogen.</title>
        <authorList>
            <person name="Chiu C.-H."/>
            <person name="Tang P."/>
            <person name="Chu C."/>
            <person name="Hu S."/>
            <person name="Bao Q."/>
            <person name="Yu J."/>
            <person name="Chou Y.-Y."/>
            <person name="Wang H.-S."/>
            <person name="Lee Y.-S."/>
        </authorList>
    </citation>
    <scope>NUCLEOTIDE SEQUENCE [LARGE SCALE GENOMIC DNA]</scope>
    <source>
        <strain>SC-B67</strain>
    </source>
</reference>
<sequence>MQEIQKNTKKEQYNLNKLQKRLRRNVGEAIADFNMIEEGDRIMVCLSGGKDSYTMLEILRNLQQSAPINFSLVAVNLDQKQPGFPEHILPAYLEPLGVEYKIVEENTYGIVKEKIPEGKTTCSLCSRLRRGILYRTATELGATKIALGHHRDDILQTLFLNMFYGGKMKGMPPKLMSDDGKHIVIRPLAYCREKDIVRFAEAKAFPIIPCNLCGSQPNLQRQVIADMLRDWDKRYPGRIETMFSAMQNVVPSHLCDTNLFDFKGITHGSEVVDGGDLAFDREEIPLQPAGWQPEEDDTSLEALRLDVIEVK</sequence>
<keyword id="KW-0004">4Fe-4S</keyword>
<keyword id="KW-0067">ATP-binding</keyword>
<keyword id="KW-0963">Cytoplasm</keyword>
<keyword id="KW-0408">Iron</keyword>
<keyword id="KW-0411">Iron-sulfur</keyword>
<keyword id="KW-0460">Magnesium</keyword>
<keyword id="KW-0479">Metal-binding</keyword>
<keyword id="KW-0547">Nucleotide-binding</keyword>
<keyword id="KW-0694">RNA-binding</keyword>
<keyword id="KW-0808">Transferase</keyword>
<keyword id="KW-0819">tRNA processing</keyword>
<keyword id="KW-0820">tRNA-binding</keyword>
<organism>
    <name type="scientific">Salmonella choleraesuis (strain SC-B67)</name>
    <dbReference type="NCBI Taxonomy" id="321314"/>
    <lineage>
        <taxon>Bacteria</taxon>
        <taxon>Pseudomonadati</taxon>
        <taxon>Pseudomonadota</taxon>
        <taxon>Gammaproteobacteria</taxon>
        <taxon>Enterobacterales</taxon>
        <taxon>Enterobacteriaceae</taxon>
        <taxon>Salmonella</taxon>
    </lineage>
</organism>
<comment type="function">
    <text evidence="1">Catalyzes the ATP-dependent 2-thiolation of cytidine in position 32 of tRNA, to form 2-thiocytidine (s(2)C32). The sulfur atoms are provided by the cysteine/cysteine desulfurase (IscS) system.</text>
</comment>
<comment type="catalytic activity">
    <reaction evidence="1">
        <text>cytidine(32) in tRNA + S-sulfanyl-L-cysteinyl-[cysteine desulfurase] + AH2 + ATP = 2-thiocytidine(32) in tRNA + L-cysteinyl-[cysteine desulfurase] + A + AMP + diphosphate + H(+)</text>
        <dbReference type="Rhea" id="RHEA:57048"/>
        <dbReference type="Rhea" id="RHEA-COMP:10288"/>
        <dbReference type="Rhea" id="RHEA-COMP:12157"/>
        <dbReference type="Rhea" id="RHEA-COMP:12158"/>
        <dbReference type="Rhea" id="RHEA-COMP:14821"/>
        <dbReference type="ChEBI" id="CHEBI:13193"/>
        <dbReference type="ChEBI" id="CHEBI:15378"/>
        <dbReference type="ChEBI" id="CHEBI:17499"/>
        <dbReference type="ChEBI" id="CHEBI:29950"/>
        <dbReference type="ChEBI" id="CHEBI:30616"/>
        <dbReference type="ChEBI" id="CHEBI:33019"/>
        <dbReference type="ChEBI" id="CHEBI:61963"/>
        <dbReference type="ChEBI" id="CHEBI:82748"/>
        <dbReference type="ChEBI" id="CHEBI:141453"/>
        <dbReference type="ChEBI" id="CHEBI:456215"/>
    </reaction>
    <physiologicalReaction direction="left-to-right" evidence="1">
        <dbReference type="Rhea" id="RHEA:57049"/>
    </physiologicalReaction>
</comment>
<comment type="cofactor">
    <cofactor evidence="1">
        <name>Mg(2+)</name>
        <dbReference type="ChEBI" id="CHEBI:18420"/>
    </cofactor>
</comment>
<comment type="cofactor">
    <cofactor evidence="1">
        <name>[4Fe-4S] cluster</name>
        <dbReference type="ChEBI" id="CHEBI:49883"/>
    </cofactor>
    <text evidence="1">Binds 1 [4Fe-4S] cluster per subunit. The cluster is chelated by three Cys residues, the fourth Fe has a free coordination site that may bind a sulfur atom transferred from the persulfide of IscS.</text>
</comment>
<comment type="pathway">
    <text evidence="1">tRNA modification.</text>
</comment>
<comment type="subunit">
    <text evidence="1">Homodimer.</text>
</comment>
<comment type="subcellular location">
    <subcellularLocation>
        <location evidence="1">Cytoplasm</location>
    </subcellularLocation>
</comment>
<comment type="miscellaneous">
    <text evidence="1">The thiolation reaction likely consists of two steps: a first activation step by ATP to form an adenylated intermediate of the target base of tRNA, and a second nucleophilic substitution step of the sulfur (S) atom supplied by the hydrosulfide attached to the Fe-S cluster.</text>
</comment>
<comment type="similarity">
    <text evidence="1">Belongs to the TtcA family.</text>
</comment>
<dbReference type="EC" id="2.8.1.-" evidence="1"/>
<dbReference type="EMBL" id="AE017220">
    <property type="protein sequence ID" value="AAX65555.1"/>
    <property type="molecule type" value="Genomic_DNA"/>
</dbReference>
<dbReference type="RefSeq" id="WP_001156206.1">
    <property type="nucleotide sequence ID" value="NC_006905.1"/>
</dbReference>
<dbReference type="SMR" id="Q57P06"/>
<dbReference type="KEGG" id="sec:SCH_1649"/>
<dbReference type="HOGENOM" id="CLU_026481_0_0_6"/>
<dbReference type="Proteomes" id="UP000000538">
    <property type="component" value="Chromosome"/>
</dbReference>
<dbReference type="GO" id="GO:0005737">
    <property type="term" value="C:cytoplasm"/>
    <property type="evidence" value="ECO:0007669"/>
    <property type="project" value="UniProtKB-SubCell"/>
</dbReference>
<dbReference type="GO" id="GO:0051539">
    <property type="term" value="F:4 iron, 4 sulfur cluster binding"/>
    <property type="evidence" value="ECO:0007669"/>
    <property type="project" value="UniProtKB-UniRule"/>
</dbReference>
<dbReference type="GO" id="GO:0005524">
    <property type="term" value="F:ATP binding"/>
    <property type="evidence" value="ECO:0007669"/>
    <property type="project" value="UniProtKB-UniRule"/>
</dbReference>
<dbReference type="GO" id="GO:0000287">
    <property type="term" value="F:magnesium ion binding"/>
    <property type="evidence" value="ECO:0007669"/>
    <property type="project" value="UniProtKB-UniRule"/>
</dbReference>
<dbReference type="GO" id="GO:0016783">
    <property type="term" value="F:sulfurtransferase activity"/>
    <property type="evidence" value="ECO:0007669"/>
    <property type="project" value="UniProtKB-UniRule"/>
</dbReference>
<dbReference type="GO" id="GO:0000049">
    <property type="term" value="F:tRNA binding"/>
    <property type="evidence" value="ECO:0007669"/>
    <property type="project" value="UniProtKB-KW"/>
</dbReference>
<dbReference type="GO" id="GO:0034227">
    <property type="term" value="P:tRNA thio-modification"/>
    <property type="evidence" value="ECO:0007669"/>
    <property type="project" value="UniProtKB-UniRule"/>
</dbReference>
<dbReference type="CDD" id="cd24138">
    <property type="entry name" value="TtcA-like"/>
    <property type="match status" value="1"/>
</dbReference>
<dbReference type="FunFam" id="3.40.50.620:FF:000046">
    <property type="entry name" value="tRNA-cytidine(32) 2-sulfurtransferase"/>
    <property type="match status" value="1"/>
</dbReference>
<dbReference type="Gene3D" id="3.40.50.620">
    <property type="entry name" value="HUPs"/>
    <property type="match status" value="1"/>
</dbReference>
<dbReference type="HAMAP" id="MF_01850">
    <property type="entry name" value="TtcA"/>
    <property type="match status" value="1"/>
</dbReference>
<dbReference type="InterPro" id="IPR014729">
    <property type="entry name" value="Rossmann-like_a/b/a_fold"/>
</dbReference>
<dbReference type="InterPro" id="IPR011063">
    <property type="entry name" value="TilS/TtcA_N"/>
</dbReference>
<dbReference type="InterPro" id="IPR012089">
    <property type="entry name" value="tRNA_Cyd_32_2_STrfase"/>
</dbReference>
<dbReference type="InterPro" id="IPR035107">
    <property type="entry name" value="tRNA_thiolation_TtcA_Ctu1"/>
</dbReference>
<dbReference type="NCBIfam" id="NF007972">
    <property type="entry name" value="PRK10696.1"/>
    <property type="match status" value="1"/>
</dbReference>
<dbReference type="PANTHER" id="PTHR43686:SF1">
    <property type="entry name" value="AMINOTRAN_5 DOMAIN-CONTAINING PROTEIN"/>
    <property type="match status" value="1"/>
</dbReference>
<dbReference type="PANTHER" id="PTHR43686">
    <property type="entry name" value="SULFURTRANSFERASE-RELATED"/>
    <property type="match status" value="1"/>
</dbReference>
<dbReference type="Pfam" id="PF01171">
    <property type="entry name" value="ATP_bind_3"/>
    <property type="match status" value="1"/>
</dbReference>
<dbReference type="PIRSF" id="PIRSF004976">
    <property type="entry name" value="ATPase_YdaO"/>
    <property type="match status" value="1"/>
</dbReference>
<dbReference type="SUPFAM" id="SSF52402">
    <property type="entry name" value="Adenine nucleotide alpha hydrolases-like"/>
    <property type="match status" value="1"/>
</dbReference>
<proteinExistence type="inferred from homology"/>
<feature type="chain" id="PRO_0000348825" description="tRNA-cytidine(32) 2-sulfurtransferase">
    <location>
        <begin position="1"/>
        <end position="311"/>
    </location>
</feature>
<feature type="short sequence motif" description="PP-loop motif" evidence="1">
    <location>
        <begin position="47"/>
        <end position="52"/>
    </location>
</feature>
<feature type="binding site" evidence="1">
    <location>
        <position position="122"/>
    </location>
    <ligand>
        <name>[4Fe-4S] cluster</name>
        <dbReference type="ChEBI" id="CHEBI:49883"/>
    </ligand>
</feature>
<feature type="binding site" evidence="1">
    <location>
        <position position="125"/>
    </location>
    <ligand>
        <name>[4Fe-4S] cluster</name>
        <dbReference type="ChEBI" id="CHEBI:49883"/>
    </ligand>
</feature>
<feature type="binding site" evidence="1">
    <location>
        <position position="213"/>
    </location>
    <ligand>
        <name>[4Fe-4S] cluster</name>
        <dbReference type="ChEBI" id="CHEBI:49883"/>
    </ligand>
</feature>
<gene>
    <name evidence="1" type="primary">ttcA</name>
    <name type="ordered locus">SCH_1649</name>
</gene>